<name>RS14_ECO57</name>
<gene>
    <name evidence="2" type="primary">rpsN</name>
    <name type="ordered locus">Z4677</name>
    <name type="ordered locus">ECs4172</name>
</gene>
<proteinExistence type="inferred from homology"/>
<comment type="function">
    <text evidence="2">Binds 16S rRNA, required for the assembly of 30S particles and may also be responsible for determining the conformation of the 16S rRNA at the A site.</text>
</comment>
<comment type="subunit">
    <text evidence="2">Part of the 30S ribosomal subunit. Contacts proteins S3 and S10.</text>
</comment>
<comment type="similarity">
    <text evidence="2">Belongs to the universal ribosomal protein uS14 family.</text>
</comment>
<reference key="1">
    <citation type="journal article" date="2001" name="Nature">
        <title>Genome sequence of enterohaemorrhagic Escherichia coli O157:H7.</title>
        <authorList>
            <person name="Perna N.T."/>
            <person name="Plunkett G. III"/>
            <person name="Burland V."/>
            <person name="Mau B."/>
            <person name="Glasner J.D."/>
            <person name="Rose D.J."/>
            <person name="Mayhew G.F."/>
            <person name="Evans P.S."/>
            <person name="Gregor J."/>
            <person name="Kirkpatrick H.A."/>
            <person name="Posfai G."/>
            <person name="Hackett J."/>
            <person name="Klink S."/>
            <person name="Boutin A."/>
            <person name="Shao Y."/>
            <person name="Miller L."/>
            <person name="Grotbeck E.J."/>
            <person name="Davis N.W."/>
            <person name="Lim A."/>
            <person name="Dimalanta E.T."/>
            <person name="Potamousis K."/>
            <person name="Apodaca J."/>
            <person name="Anantharaman T.S."/>
            <person name="Lin J."/>
            <person name="Yen G."/>
            <person name="Schwartz D.C."/>
            <person name="Welch R.A."/>
            <person name="Blattner F.R."/>
        </authorList>
    </citation>
    <scope>NUCLEOTIDE SEQUENCE [LARGE SCALE GENOMIC DNA]</scope>
    <source>
        <strain>O157:H7 / EDL933 / ATCC 700927 / EHEC</strain>
    </source>
</reference>
<reference key="2">
    <citation type="journal article" date="2001" name="DNA Res.">
        <title>Complete genome sequence of enterohemorrhagic Escherichia coli O157:H7 and genomic comparison with a laboratory strain K-12.</title>
        <authorList>
            <person name="Hayashi T."/>
            <person name="Makino K."/>
            <person name="Ohnishi M."/>
            <person name="Kurokawa K."/>
            <person name="Ishii K."/>
            <person name="Yokoyama K."/>
            <person name="Han C.-G."/>
            <person name="Ohtsubo E."/>
            <person name="Nakayama K."/>
            <person name="Murata T."/>
            <person name="Tanaka M."/>
            <person name="Tobe T."/>
            <person name="Iida T."/>
            <person name="Takami H."/>
            <person name="Honda T."/>
            <person name="Sasakawa C."/>
            <person name="Ogasawara N."/>
            <person name="Yasunaga T."/>
            <person name="Kuhara S."/>
            <person name="Shiba T."/>
            <person name="Hattori M."/>
            <person name="Shinagawa H."/>
        </authorList>
    </citation>
    <scope>NUCLEOTIDE SEQUENCE [LARGE SCALE GENOMIC DNA]</scope>
    <source>
        <strain>O157:H7 / Sakai / RIMD 0509952 / EHEC</strain>
    </source>
</reference>
<accession>P0AG61</accession>
<accession>P02370</accession>
<evidence type="ECO:0000250" key="1"/>
<evidence type="ECO:0000255" key="2">
    <source>
        <dbReference type="HAMAP-Rule" id="MF_00537"/>
    </source>
</evidence>
<evidence type="ECO:0000305" key="3"/>
<feature type="initiator methionine" description="Removed" evidence="1">
    <location>
        <position position="1"/>
    </location>
</feature>
<feature type="chain" id="PRO_0000130891" description="Small ribosomal subunit protein uS14">
    <location>
        <begin position="2"/>
        <end position="101"/>
    </location>
</feature>
<sequence>MAKQSMKAREVKRVALADKYFAKRAELKAIISDVNASDEDRWNAVLKLQTLPRDSSPSRQRNRCRQTGRPHGFLRKFGLSRIKVREAAMRGEIPGLKKASW</sequence>
<organism>
    <name type="scientific">Escherichia coli O157:H7</name>
    <dbReference type="NCBI Taxonomy" id="83334"/>
    <lineage>
        <taxon>Bacteria</taxon>
        <taxon>Pseudomonadati</taxon>
        <taxon>Pseudomonadota</taxon>
        <taxon>Gammaproteobacteria</taxon>
        <taxon>Enterobacterales</taxon>
        <taxon>Enterobacteriaceae</taxon>
        <taxon>Escherichia</taxon>
    </lineage>
</organism>
<keyword id="KW-1185">Reference proteome</keyword>
<keyword id="KW-0687">Ribonucleoprotein</keyword>
<keyword id="KW-0689">Ribosomal protein</keyword>
<keyword id="KW-0694">RNA-binding</keyword>
<keyword id="KW-0699">rRNA-binding</keyword>
<dbReference type="EMBL" id="AE005174">
    <property type="protein sequence ID" value="AAG58428.1"/>
    <property type="molecule type" value="Genomic_DNA"/>
</dbReference>
<dbReference type="EMBL" id="BA000007">
    <property type="protein sequence ID" value="BAB37595.1"/>
    <property type="molecule type" value="Genomic_DNA"/>
</dbReference>
<dbReference type="PIR" id="D91150">
    <property type="entry name" value="D91150"/>
</dbReference>
<dbReference type="PIR" id="H85995">
    <property type="entry name" value="H85995"/>
</dbReference>
<dbReference type="RefSeq" id="NP_312199.1">
    <property type="nucleotide sequence ID" value="NC_002695.1"/>
</dbReference>
<dbReference type="RefSeq" id="WP_001118930.1">
    <property type="nucleotide sequence ID" value="NZ_VOAI01000041.1"/>
</dbReference>
<dbReference type="SMR" id="P0AG61"/>
<dbReference type="STRING" id="155864.Z4677"/>
<dbReference type="GeneID" id="915976"/>
<dbReference type="GeneID" id="93778680"/>
<dbReference type="KEGG" id="ece:Z4677"/>
<dbReference type="KEGG" id="ecs:ECs_4172"/>
<dbReference type="PATRIC" id="fig|386585.9.peg.4355"/>
<dbReference type="eggNOG" id="COG0199">
    <property type="taxonomic scope" value="Bacteria"/>
</dbReference>
<dbReference type="HOGENOM" id="CLU_139869_0_1_6"/>
<dbReference type="OMA" id="FGLCRNQ"/>
<dbReference type="Proteomes" id="UP000000558">
    <property type="component" value="Chromosome"/>
</dbReference>
<dbReference type="Proteomes" id="UP000002519">
    <property type="component" value="Chromosome"/>
</dbReference>
<dbReference type="GO" id="GO:0005737">
    <property type="term" value="C:cytoplasm"/>
    <property type="evidence" value="ECO:0007669"/>
    <property type="project" value="UniProtKB-ARBA"/>
</dbReference>
<dbReference type="GO" id="GO:0015935">
    <property type="term" value="C:small ribosomal subunit"/>
    <property type="evidence" value="ECO:0007669"/>
    <property type="project" value="TreeGrafter"/>
</dbReference>
<dbReference type="GO" id="GO:0019843">
    <property type="term" value="F:rRNA binding"/>
    <property type="evidence" value="ECO:0007669"/>
    <property type="project" value="UniProtKB-UniRule"/>
</dbReference>
<dbReference type="GO" id="GO:0003735">
    <property type="term" value="F:structural constituent of ribosome"/>
    <property type="evidence" value="ECO:0007669"/>
    <property type="project" value="InterPro"/>
</dbReference>
<dbReference type="GO" id="GO:0006412">
    <property type="term" value="P:translation"/>
    <property type="evidence" value="ECO:0007669"/>
    <property type="project" value="UniProtKB-UniRule"/>
</dbReference>
<dbReference type="FunFam" id="1.10.287.1480:FF:000001">
    <property type="entry name" value="30S ribosomal protein S14"/>
    <property type="match status" value="1"/>
</dbReference>
<dbReference type="Gene3D" id="1.10.287.1480">
    <property type="match status" value="1"/>
</dbReference>
<dbReference type="HAMAP" id="MF_00537">
    <property type="entry name" value="Ribosomal_uS14_1"/>
    <property type="match status" value="1"/>
</dbReference>
<dbReference type="InterPro" id="IPR001209">
    <property type="entry name" value="Ribosomal_uS14"/>
</dbReference>
<dbReference type="InterPro" id="IPR023036">
    <property type="entry name" value="Ribosomal_uS14_bac/plastid"/>
</dbReference>
<dbReference type="InterPro" id="IPR018271">
    <property type="entry name" value="Ribosomal_uS14_CS"/>
</dbReference>
<dbReference type="NCBIfam" id="NF006477">
    <property type="entry name" value="PRK08881.1"/>
    <property type="match status" value="1"/>
</dbReference>
<dbReference type="PANTHER" id="PTHR19836">
    <property type="entry name" value="30S RIBOSOMAL PROTEIN S14"/>
    <property type="match status" value="1"/>
</dbReference>
<dbReference type="PANTHER" id="PTHR19836:SF19">
    <property type="entry name" value="SMALL RIBOSOMAL SUBUNIT PROTEIN US14M"/>
    <property type="match status" value="1"/>
</dbReference>
<dbReference type="Pfam" id="PF00253">
    <property type="entry name" value="Ribosomal_S14"/>
    <property type="match status" value="1"/>
</dbReference>
<dbReference type="SUPFAM" id="SSF57716">
    <property type="entry name" value="Glucocorticoid receptor-like (DNA-binding domain)"/>
    <property type="match status" value="1"/>
</dbReference>
<dbReference type="PROSITE" id="PS00527">
    <property type="entry name" value="RIBOSOMAL_S14"/>
    <property type="match status" value="1"/>
</dbReference>
<protein>
    <recommendedName>
        <fullName evidence="2">Small ribosomal subunit protein uS14</fullName>
    </recommendedName>
    <alternativeName>
        <fullName evidence="3">30S ribosomal protein S14</fullName>
    </alternativeName>
</protein>